<gene>
    <name type="primary">arg</name>
    <name type="synonym">rocF</name>
    <name type="ordered locus">SACOL2154</name>
</gene>
<accession>P60086</accession>
<accession>Q9R2U3</accession>
<comment type="catalytic activity">
    <reaction evidence="1">
        <text>L-arginine + H2O = urea + L-ornithine</text>
        <dbReference type="Rhea" id="RHEA:20569"/>
        <dbReference type="ChEBI" id="CHEBI:15377"/>
        <dbReference type="ChEBI" id="CHEBI:16199"/>
        <dbReference type="ChEBI" id="CHEBI:32682"/>
        <dbReference type="ChEBI" id="CHEBI:46911"/>
        <dbReference type="EC" id="3.5.3.1"/>
    </reaction>
</comment>
<comment type="cofactor">
    <cofactor evidence="3">
        <name>Mn(2+)</name>
        <dbReference type="ChEBI" id="CHEBI:29035"/>
    </cofactor>
    <text evidence="3">Binds 2 manganese ions per subunit.</text>
</comment>
<comment type="pathway">
    <text evidence="1">Nitrogen metabolism; urea cycle; L-ornithine and urea from L-arginine: step 1/1.</text>
</comment>
<comment type="similarity">
    <text evidence="3">Belongs to the arginase family.</text>
</comment>
<feature type="chain" id="PRO_0000173719" description="Arginase">
    <location>
        <begin position="1"/>
        <end position="302"/>
    </location>
</feature>
<feature type="binding site" evidence="3">
    <location>
        <position position="103"/>
    </location>
    <ligand>
        <name>Mn(2+)</name>
        <dbReference type="ChEBI" id="CHEBI:29035"/>
        <label>1</label>
    </ligand>
</feature>
<feature type="binding site" evidence="3">
    <location>
        <position position="126"/>
    </location>
    <ligand>
        <name>Mn(2+)</name>
        <dbReference type="ChEBI" id="CHEBI:29035"/>
        <label>1</label>
    </ligand>
</feature>
<feature type="binding site" evidence="3">
    <location>
        <position position="126"/>
    </location>
    <ligand>
        <name>Mn(2+)</name>
        <dbReference type="ChEBI" id="CHEBI:29035"/>
        <label>2</label>
    </ligand>
</feature>
<feature type="binding site" evidence="2">
    <location>
        <begin position="128"/>
        <end position="132"/>
    </location>
    <ligand>
        <name>substrate</name>
    </ligand>
</feature>
<feature type="binding site" evidence="3">
    <location>
        <position position="128"/>
    </location>
    <ligand>
        <name>Mn(2+)</name>
        <dbReference type="ChEBI" id="CHEBI:29035"/>
        <label>2</label>
    </ligand>
</feature>
<feature type="binding site" evidence="3">
    <location>
        <position position="130"/>
    </location>
    <ligand>
        <name>Mn(2+)</name>
        <dbReference type="ChEBI" id="CHEBI:29035"/>
        <label>1</label>
    </ligand>
</feature>
<feature type="binding site" evidence="2">
    <location>
        <begin position="139"/>
        <end position="141"/>
    </location>
    <ligand>
        <name>substrate</name>
    </ligand>
</feature>
<feature type="binding site" evidence="2">
    <location>
        <position position="180"/>
    </location>
    <ligand>
        <name>substrate</name>
    </ligand>
</feature>
<feature type="binding site" evidence="3">
    <location>
        <position position="229"/>
    </location>
    <ligand>
        <name>Mn(2+)</name>
        <dbReference type="ChEBI" id="CHEBI:29035"/>
        <label>1</label>
    </ligand>
</feature>
<feature type="binding site" evidence="3">
    <location>
        <position position="229"/>
    </location>
    <ligand>
        <name>Mn(2+)</name>
        <dbReference type="ChEBI" id="CHEBI:29035"/>
        <label>2</label>
    </ligand>
</feature>
<feature type="binding site" evidence="3">
    <location>
        <position position="231"/>
    </location>
    <ligand>
        <name>Mn(2+)</name>
        <dbReference type="ChEBI" id="CHEBI:29035"/>
        <label>2</label>
    </ligand>
</feature>
<feature type="binding site" evidence="2">
    <location>
        <position position="243"/>
    </location>
    <ligand>
        <name>substrate</name>
    </ligand>
</feature>
<feature type="binding site" evidence="2">
    <location>
        <position position="274"/>
    </location>
    <ligand>
        <name>substrate</name>
    </ligand>
</feature>
<proteinExistence type="inferred from homology"/>
<keyword id="KW-0056">Arginine metabolism</keyword>
<keyword id="KW-0378">Hydrolase</keyword>
<keyword id="KW-0464">Manganese</keyword>
<keyword id="KW-0479">Metal-binding</keyword>
<dbReference type="EC" id="3.5.3.1" evidence="1"/>
<dbReference type="EMBL" id="Y09927">
    <property type="protein sequence ID" value="CAB55326.1"/>
    <property type="molecule type" value="Genomic_DNA"/>
</dbReference>
<dbReference type="EMBL" id="Y09594">
    <property type="protein sequence ID" value="CAA70781.1"/>
    <property type="molecule type" value="Genomic_DNA"/>
</dbReference>
<dbReference type="EMBL" id="CP000046">
    <property type="protein sequence ID" value="AAW38462.1"/>
    <property type="molecule type" value="Genomic_DNA"/>
</dbReference>
<dbReference type="RefSeq" id="WP_000167867.1">
    <property type="nucleotide sequence ID" value="NZ_JBGOFO010000007.1"/>
</dbReference>
<dbReference type="SMR" id="P60086"/>
<dbReference type="KEGG" id="sac:SACOL2154"/>
<dbReference type="HOGENOM" id="CLU_039478_6_2_9"/>
<dbReference type="UniPathway" id="UPA00158">
    <property type="reaction ID" value="UER00270"/>
</dbReference>
<dbReference type="Proteomes" id="UP000000530">
    <property type="component" value="Chromosome"/>
</dbReference>
<dbReference type="GO" id="GO:0005737">
    <property type="term" value="C:cytoplasm"/>
    <property type="evidence" value="ECO:0007669"/>
    <property type="project" value="TreeGrafter"/>
</dbReference>
<dbReference type="GO" id="GO:0004053">
    <property type="term" value="F:arginase activity"/>
    <property type="evidence" value="ECO:0007669"/>
    <property type="project" value="UniProtKB-EC"/>
</dbReference>
<dbReference type="GO" id="GO:0030145">
    <property type="term" value="F:manganese ion binding"/>
    <property type="evidence" value="ECO:0007669"/>
    <property type="project" value="TreeGrafter"/>
</dbReference>
<dbReference type="GO" id="GO:0019547">
    <property type="term" value="P:arginine catabolic process to ornithine"/>
    <property type="evidence" value="ECO:0007669"/>
    <property type="project" value="TreeGrafter"/>
</dbReference>
<dbReference type="GO" id="GO:0000050">
    <property type="term" value="P:urea cycle"/>
    <property type="evidence" value="ECO:0007669"/>
    <property type="project" value="UniProtKB-UniPathway"/>
</dbReference>
<dbReference type="CDD" id="cd09989">
    <property type="entry name" value="Arginase"/>
    <property type="match status" value="1"/>
</dbReference>
<dbReference type="FunFam" id="3.40.800.10:FF:000005">
    <property type="entry name" value="Arginase"/>
    <property type="match status" value="1"/>
</dbReference>
<dbReference type="Gene3D" id="3.40.800.10">
    <property type="entry name" value="Ureohydrolase domain"/>
    <property type="match status" value="1"/>
</dbReference>
<dbReference type="InterPro" id="IPR014033">
    <property type="entry name" value="Arginase"/>
</dbReference>
<dbReference type="InterPro" id="IPR006035">
    <property type="entry name" value="Ureohydrolase"/>
</dbReference>
<dbReference type="InterPro" id="IPR023696">
    <property type="entry name" value="Ureohydrolase_dom_sf"/>
</dbReference>
<dbReference type="InterPro" id="IPR020855">
    <property type="entry name" value="Ureohydrolase_Mn_BS"/>
</dbReference>
<dbReference type="NCBIfam" id="TIGR01229">
    <property type="entry name" value="rocF_arginase"/>
    <property type="match status" value="1"/>
</dbReference>
<dbReference type="PANTHER" id="PTHR43782">
    <property type="entry name" value="ARGINASE"/>
    <property type="match status" value="1"/>
</dbReference>
<dbReference type="PANTHER" id="PTHR43782:SF3">
    <property type="entry name" value="ARGINASE"/>
    <property type="match status" value="1"/>
</dbReference>
<dbReference type="Pfam" id="PF00491">
    <property type="entry name" value="Arginase"/>
    <property type="match status" value="1"/>
</dbReference>
<dbReference type="PIRSF" id="PIRSF036979">
    <property type="entry name" value="Arginase"/>
    <property type="match status" value="1"/>
</dbReference>
<dbReference type="PRINTS" id="PR00116">
    <property type="entry name" value="ARGINASE"/>
</dbReference>
<dbReference type="SUPFAM" id="SSF52768">
    <property type="entry name" value="Arginase/deacetylase"/>
    <property type="match status" value="1"/>
</dbReference>
<dbReference type="PROSITE" id="PS01053">
    <property type="entry name" value="ARGINASE_1"/>
    <property type="match status" value="1"/>
</dbReference>
<dbReference type="PROSITE" id="PS51409">
    <property type="entry name" value="ARGINASE_2"/>
    <property type="match status" value="1"/>
</dbReference>
<reference key="1">
    <citation type="journal article" date="1999" name="Microb. Drug Resist.">
        <title>Mrp -- a new auxiliary gene essential for optimal expression of methicillin resistance in Staphylococcus aureus.</title>
        <authorList>
            <person name="Wu S.-W."/>
            <person name="de Lencastre H."/>
        </authorList>
    </citation>
    <scope>NUCLEOTIDE SEQUENCE [GENOMIC DNA]</scope>
</reference>
<reference key="2">
    <citation type="journal article" date="2005" name="J. Bacteriol.">
        <title>Insights on evolution of virulence and resistance from the complete genome analysis of an early methicillin-resistant Staphylococcus aureus strain and a biofilm-producing methicillin-resistant Staphylococcus epidermidis strain.</title>
        <authorList>
            <person name="Gill S.R."/>
            <person name="Fouts D.E."/>
            <person name="Archer G.L."/>
            <person name="Mongodin E.F."/>
            <person name="DeBoy R.T."/>
            <person name="Ravel J."/>
            <person name="Paulsen I.T."/>
            <person name="Kolonay J.F."/>
            <person name="Brinkac L.M."/>
            <person name="Beanan M.J."/>
            <person name="Dodson R.J."/>
            <person name="Daugherty S.C."/>
            <person name="Madupu R."/>
            <person name="Angiuoli S.V."/>
            <person name="Durkin A.S."/>
            <person name="Haft D.H."/>
            <person name="Vamathevan J.J."/>
            <person name="Khouri H."/>
            <person name="Utterback T.R."/>
            <person name="Lee C."/>
            <person name="Dimitrov G."/>
            <person name="Jiang L."/>
            <person name="Qin H."/>
            <person name="Weidman J."/>
            <person name="Tran K."/>
            <person name="Kang K.H."/>
            <person name="Hance I.R."/>
            <person name="Nelson K.E."/>
            <person name="Fraser C.M."/>
        </authorList>
    </citation>
    <scope>NUCLEOTIDE SEQUENCE [LARGE SCALE GENOMIC DNA]</scope>
    <source>
        <strain>COL</strain>
    </source>
</reference>
<name>ARGI_STAAC</name>
<evidence type="ECO:0000250" key="1">
    <source>
        <dbReference type="UniProtKB" id="P05089"/>
    </source>
</evidence>
<evidence type="ECO:0000250" key="2">
    <source>
        <dbReference type="UniProtKB" id="P53608"/>
    </source>
</evidence>
<evidence type="ECO:0000255" key="3">
    <source>
        <dbReference type="PROSITE-ProRule" id="PRU00742"/>
    </source>
</evidence>
<sequence>MTKTKAIDIIGAPSTFGQRKLGVDLGPTAIRYAGLISRLKQLDLDVYDKGDIKVPAVNIEKFHSEQKGLRNYDEIIDVNQKLNKEVSASIENNRFPLVLGGDHSIAVGSVSAISKHYNNLGVIWYDAHGDLNIPEESPSGNIHGMPLRILTGEGPKELLELNSNVIKPENIVLIGMRDLDKGERQFIKDHNIKTFTMSDIDKLGIKEVIENTIEYLKSRNVDGVHLSLDVDALDPLETPGTGTRVLGGLSYRESHFALELLHQSHLISSMDLVEVNPLIDSNNHTAEQAVSLVGTFFGETLL</sequence>
<organism>
    <name type="scientific">Staphylococcus aureus (strain COL)</name>
    <dbReference type="NCBI Taxonomy" id="93062"/>
    <lineage>
        <taxon>Bacteria</taxon>
        <taxon>Bacillati</taxon>
        <taxon>Bacillota</taxon>
        <taxon>Bacilli</taxon>
        <taxon>Bacillales</taxon>
        <taxon>Staphylococcaceae</taxon>
        <taxon>Staphylococcus</taxon>
    </lineage>
</organism>
<protein>
    <recommendedName>
        <fullName>Arginase</fullName>
        <ecNumber evidence="1">3.5.3.1</ecNumber>
    </recommendedName>
</protein>